<keyword id="KW-0963">Cytoplasm</keyword>
<keyword id="KW-1185">Reference proteome</keyword>
<keyword id="KW-0808">Transferase</keyword>
<reference key="1">
    <citation type="journal article" date="2004" name="Genome Res.">
        <title>The status, quality, and expansion of the NIH full-length cDNA project: the Mammalian Gene Collection (MGC).</title>
        <authorList>
            <consortium name="The MGC Project Team"/>
        </authorList>
    </citation>
    <scope>NUCLEOTIDE SEQUENCE [LARGE SCALE MRNA]</scope>
    <source>
        <tissue>Testis</tissue>
    </source>
</reference>
<gene>
    <name evidence="3" type="primary">Gstt4</name>
</gene>
<sequence length="240" mass="27970">MGLELYMDLLSAPCRAVYIFARKNGIPFDFQFVDLLKGHHHSKEYIEINPLRKVPSLRDGKFILSESVAILCYLCRKYSAPSHWYPPDLHMRARVDEFMAWQHTAIQVPMSKILWIKLIIPMITGEEVPTERLDKTLDEVNKNIKQFEEKFLQDKLFITGDHISLADLVALVEMMQPMGTNHNVFISSKLAEWRMRVELAIGSGLFWEAHDRLVKLPSWDCSTLDPSIKMKICEFLQKYK</sequence>
<evidence type="ECO:0000250" key="1">
    <source>
        <dbReference type="UniProtKB" id="P30711"/>
    </source>
</evidence>
<evidence type="ECO:0000305" key="2"/>
<evidence type="ECO:0000312" key="3">
    <source>
        <dbReference type="RGD" id="1591294"/>
    </source>
</evidence>
<comment type="function">
    <text evidence="1">Conjugation of reduced glutathione to a wide number of exogenous and endogenous hydrophobic electrophiles.</text>
</comment>
<comment type="catalytic activity">
    <reaction evidence="1">
        <text>RX + glutathione = an S-substituted glutathione + a halide anion + H(+)</text>
        <dbReference type="Rhea" id="RHEA:16437"/>
        <dbReference type="ChEBI" id="CHEBI:15378"/>
        <dbReference type="ChEBI" id="CHEBI:16042"/>
        <dbReference type="ChEBI" id="CHEBI:17792"/>
        <dbReference type="ChEBI" id="CHEBI:57925"/>
        <dbReference type="ChEBI" id="CHEBI:90779"/>
        <dbReference type="EC" id="2.5.1.18"/>
    </reaction>
</comment>
<comment type="subunit">
    <text evidence="1">Homodimer.</text>
</comment>
<comment type="subcellular location">
    <subcellularLocation>
        <location evidence="2">Cytoplasm</location>
    </subcellularLocation>
</comment>
<comment type="similarity">
    <text evidence="2">Belongs to the GST superfamily. Theta family.</text>
</comment>
<accession>Q4V8E6</accession>
<organism>
    <name type="scientific">Rattus norvegicus</name>
    <name type="common">Rat</name>
    <dbReference type="NCBI Taxonomy" id="10116"/>
    <lineage>
        <taxon>Eukaryota</taxon>
        <taxon>Metazoa</taxon>
        <taxon>Chordata</taxon>
        <taxon>Craniata</taxon>
        <taxon>Vertebrata</taxon>
        <taxon>Euteleostomi</taxon>
        <taxon>Mammalia</taxon>
        <taxon>Eutheria</taxon>
        <taxon>Euarchontoglires</taxon>
        <taxon>Glires</taxon>
        <taxon>Rodentia</taxon>
        <taxon>Myomorpha</taxon>
        <taxon>Muroidea</taxon>
        <taxon>Muridae</taxon>
        <taxon>Murinae</taxon>
        <taxon>Rattus</taxon>
    </lineage>
</organism>
<dbReference type="EC" id="2.5.1.18" evidence="1"/>
<dbReference type="EMBL" id="BC097423">
    <property type="protein sequence ID" value="AAH97423.1"/>
    <property type="molecule type" value="mRNA"/>
</dbReference>
<dbReference type="RefSeq" id="NP_001103145.1">
    <property type="nucleotide sequence ID" value="NM_001109675.1"/>
</dbReference>
<dbReference type="SMR" id="Q4V8E6"/>
<dbReference type="FunCoup" id="Q4V8E6">
    <property type="interactions" value="152"/>
</dbReference>
<dbReference type="STRING" id="10116.ENSRNOP00000055115"/>
<dbReference type="iPTMnet" id="Q4V8E6"/>
<dbReference type="PhosphoSitePlus" id="Q4V8E6"/>
<dbReference type="PaxDb" id="10116-ENSRNOP00000055115"/>
<dbReference type="Ensembl" id="ENSRNOT00000058314.5">
    <property type="protein sequence ID" value="ENSRNOP00000055115.3"/>
    <property type="gene ID" value="ENSRNOG00000038300.5"/>
</dbReference>
<dbReference type="GeneID" id="686922"/>
<dbReference type="KEGG" id="rno:686922"/>
<dbReference type="UCSC" id="RGD:1591294">
    <property type="organism name" value="rat"/>
</dbReference>
<dbReference type="AGR" id="RGD:1591294"/>
<dbReference type="CTD" id="25774"/>
<dbReference type="RGD" id="1591294">
    <property type="gene designation" value="Gstt4"/>
</dbReference>
<dbReference type="eggNOG" id="KOG0867">
    <property type="taxonomic scope" value="Eukaryota"/>
</dbReference>
<dbReference type="GeneTree" id="ENSGT00940000161301"/>
<dbReference type="HOGENOM" id="CLU_011226_2_0_1"/>
<dbReference type="InParanoid" id="Q4V8E6"/>
<dbReference type="OMA" id="IQQPMSK"/>
<dbReference type="OrthoDB" id="422574at2759"/>
<dbReference type="PhylomeDB" id="Q4V8E6"/>
<dbReference type="PRO" id="PR:Q4V8E6"/>
<dbReference type="Proteomes" id="UP000002494">
    <property type="component" value="Chromosome 20"/>
</dbReference>
<dbReference type="Bgee" id="ENSRNOG00000038300">
    <property type="expression patterns" value="Expressed in testis and 3 other cell types or tissues"/>
</dbReference>
<dbReference type="GO" id="GO:0005737">
    <property type="term" value="C:cytoplasm"/>
    <property type="evidence" value="ECO:0000318"/>
    <property type="project" value="GO_Central"/>
</dbReference>
<dbReference type="GO" id="GO:0004364">
    <property type="term" value="F:glutathione transferase activity"/>
    <property type="evidence" value="ECO:0000318"/>
    <property type="project" value="GO_Central"/>
</dbReference>
<dbReference type="GO" id="GO:0006749">
    <property type="term" value="P:glutathione metabolic process"/>
    <property type="evidence" value="ECO:0000318"/>
    <property type="project" value="GO_Central"/>
</dbReference>
<dbReference type="CDD" id="cd03183">
    <property type="entry name" value="GST_C_Theta"/>
    <property type="match status" value="1"/>
</dbReference>
<dbReference type="CDD" id="cd03050">
    <property type="entry name" value="GST_N_Theta"/>
    <property type="match status" value="1"/>
</dbReference>
<dbReference type="FunFam" id="1.20.1050.10:FF:000008">
    <property type="entry name" value="Glutathione S-transferase theta-1"/>
    <property type="match status" value="1"/>
</dbReference>
<dbReference type="FunFam" id="3.40.30.10:FF:000196">
    <property type="entry name" value="Glutathione S-transferase theta-4"/>
    <property type="match status" value="1"/>
</dbReference>
<dbReference type="Gene3D" id="1.20.1050.10">
    <property type="match status" value="1"/>
</dbReference>
<dbReference type="Gene3D" id="3.40.30.10">
    <property type="entry name" value="Glutaredoxin"/>
    <property type="match status" value="1"/>
</dbReference>
<dbReference type="InterPro" id="IPR010987">
    <property type="entry name" value="Glutathione-S-Trfase_C-like"/>
</dbReference>
<dbReference type="InterPro" id="IPR036282">
    <property type="entry name" value="Glutathione-S-Trfase_C_sf"/>
</dbReference>
<dbReference type="InterPro" id="IPR040079">
    <property type="entry name" value="Glutathione_S-Trfase"/>
</dbReference>
<dbReference type="InterPro" id="IPR004045">
    <property type="entry name" value="Glutathione_S-Trfase_N"/>
</dbReference>
<dbReference type="InterPro" id="IPR004046">
    <property type="entry name" value="GST_C"/>
</dbReference>
<dbReference type="InterPro" id="IPR040077">
    <property type="entry name" value="GST_C_Theta"/>
</dbReference>
<dbReference type="InterPro" id="IPR040075">
    <property type="entry name" value="GST_N_Theta"/>
</dbReference>
<dbReference type="InterPro" id="IPR051369">
    <property type="entry name" value="GST_Theta"/>
</dbReference>
<dbReference type="InterPro" id="IPR036249">
    <property type="entry name" value="Thioredoxin-like_sf"/>
</dbReference>
<dbReference type="PANTHER" id="PTHR43917">
    <property type="match status" value="1"/>
</dbReference>
<dbReference type="PANTHER" id="PTHR43917:SF13">
    <property type="entry name" value="GLUTATHIONE S-TRANSFERASE THETA-4-RELATED"/>
    <property type="match status" value="1"/>
</dbReference>
<dbReference type="Pfam" id="PF00043">
    <property type="entry name" value="GST_C"/>
    <property type="match status" value="1"/>
</dbReference>
<dbReference type="Pfam" id="PF13417">
    <property type="entry name" value="GST_N_3"/>
    <property type="match status" value="1"/>
</dbReference>
<dbReference type="SFLD" id="SFLDS00019">
    <property type="entry name" value="Glutathione_Transferase_(cytos"/>
    <property type="match status" value="1"/>
</dbReference>
<dbReference type="SFLD" id="SFLDG00358">
    <property type="entry name" value="Main_(cytGST)"/>
    <property type="match status" value="1"/>
</dbReference>
<dbReference type="SUPFAM" id="SSF47616">
    <property type="entry name" value="GST C-terminal domain-like"/>
    <property type="match status" value="1"/>
</dbReference>
<dbReference type="SUPFAM" id="SSF52833">
    <property type="entry name" value="Thioredoxin-like"/>
    <property type="match status" value="1"/>
</dbReference>
<dbReference type="PROSITE" id="PS50405">
    <property type="entry name" value="GST_CTER"/>
    <property type="match status" value="1"/>
</dbReference>
<dbReference type="PROSITE" id="PS50404">
    <property type="entry name" value="GST_NTER"/>
    <property type="match status" value="1"/>
</dbReference>
<name>GSTT4_RAT</name>
<protein>
    <recommendedName>
        <fullName evidence="2">Glutathione S-transferase theta-4</fullName>
        <ecNumber evidence="1">2.5.1.18</ecNumber>
    </recommendedName>
    <alternativeName>
        <fullName>GST class-theta-4</fullName>
    </alternativeName>
</protein>
<feature type="chain" id="PRO_0000329077" description="Glutathione S-transferase theta-4">
    <location>
        <begin position="1"/>
        <end position="240"/>
    </location>
</feature>
<feature type="domain" description="GST N-terminal">
    <location>
        <begin position="1"/>
        <end position="82"/>
    </location>
</feature>
<feature type="domain" description="GST C-terminal">
    <location>
        <begin position="88"/>
        <end position="218"/>
    </location>
</feature>
<feature type="binding site" evidence="1">
    <location>
        <position position="40"/>
    </location>
    <ligand>
        <name>glutathione</name>
        <dbReference type="ChEBI" id="CHEBI:57925"/>
    </ligand>
</feature>
<feature type="binding site" evidence="1">
    <location>
        <begin position="53"/>
        <end position="54"/>
    </location>
    <ligand>
        <name>glutathione</name>
        <dbReference type="ChEBI" id="CHEBI:57925"/>
    </ligand>
</feature>
<feature type="binding site" evidence="1">
    <location>
        <begin position="66"/>
        <end position="67"/>
    </location>
    <ligand>
        <name>glutathione</name>
        <dbReference type="ChEBI" id="CHEBI:57925"/>
    </ligand>
</feature>
<proteinExistence type="evidence at transcript level"/>